<sequence length="256" mass="29185">MAVGKNKRLSKGKKGVKKRTVDPFTRKDEYSVKAPSTFQTRDVGKTLVNRTSGLKNANDSLKGRIFEVSLADLQNDEDHAFRKVKLRVDEIQGKNCLTNFHGLDFTTDKLRSLVRKWQSLIEANVTVKTTDDYLLRLFAIAFTKRRPNQIKKTTYARSSQIRAIRKKMTEIMQREAASCSLAQLTTKLIPEVIGREIEKATQGIYPLQNVHIRKVKLLKSPKFDLGALLNLHGESTTDDKGHKVEREFKEQVLESV</sequence>
<gene>
    <name type="primary">rps1</name>
    <name type="ORF">An17g02390</name>
</gene>
<reference key="1">
    <citation type="journal article" date="2007" name="Nat. Biotechnol.">
        <title>Genome sequencing and analysis of the versatile cell factory Aspergillus niger CBS 513.88.</title>
        <authorList>
            <person name="Pel H.J."/>
            <person name="de Winde J.H."/>
            <person name="Archer D.B."/>
            <person name="Dyer P.S."/>
            <person name="Hofmann G."/>
            <person name="Schaap P.J."/>
            <person name="Turner G."/>
            <person name="de Vries R.P."/>
            <person name="Albang R."/>
            <person name="Albermann K."/>
            <person name="Andersen M.R."/>
            <person name="Bendtsen J.D."/>
            <person name="Benen J.A.E."/>
            <person name="van den Berg M."/>
            <person name="Breestraat S."/>
            <person name="Caddick M.X."/>
            <person name="Contreras R."/>
            <person name="Cornell M."/>
            <person name="Coutinho P.M."/>
            <person name="Danchin E.G.J."/>
            <person name="Debets A.J.M."/>
            <person name="Dekker P."/>
            <person name="van Dijck P.W.M."/>
            <person name="van Dijk A."/>
            <person name="Dijkhuizen L."/>
            <person name="Driessen A.J.M."/>
            <person name="d'Enfert C."/>
            <person name="Geysens S."/>
            <person name="Goosen C."/>
            <person name="Groot G.S.P."/>
            <person name="de Groot P.W.J."/>
            <person name="Guillemette T."/>
            <person name="Henrissat B."/>
            <person name="Herweijer M."/>
            <person name="van den Hombergh J.P.T.W."/>
            <person name="van den Hondel C.A.M.J.J."/>
            <person name="van der Heijden R.T.J.M."/>
            <person name="van der Kaaij R.M."/>
            <person name="Klis F.M."/>
            <person name="Kools H.J."/>
            <person name="Kubicek C.P."/>
            <person name="van Kuyk P.A."/>
            <person name="Lauber J."/>
            <person name="Lu X."/>
            <person name="van der Maarel M.J.E.C."/>
            <person name="Meulenberg R."/>
            <person name="Menke H."/>
            <person name="Mortimer M.A."/>
            <person name="Nielsen J."/>
            <person name="Oliver S.G."/>
            <person name="Olsthoorn M."/>
            <person name="Pal K."/>
            <person name="van Peij N.N.M.E."/>
            <person name="Ram A.F.J."/>
            <person name="Rinas U."/>
            <person name="Roubos J.A."/>
            <person name="Sagt C.M.J."/>
            <person name="Schmoll M."/>
            <person name="Sun J."/>
            <person name="Ussery D."/>
            <person name="Varga J."/>
            <person name="Vervecken W."/>
            <person name="van de Vondervoort P.J.J."/>
            <person name="Wedler H."/>
            <person name="Woesten H.A.B."/>
            <person name="Zeng A.-P."/>
            <person name="van Ooyen A.J.J."/>
            <person name="Visser J."/>
            <person name="Stam H."/>
        </authorList>
    </citation>
    <scope>NUCLEOTIDE SEQUENCE [LARGE SCALE GENOMIC DNA]</scope>
    <source>
        <strain>ATCC MYA-4892 / CBS 513.88 / FGSC A1513</strain>
    </source>
</reference>
<accession>A2R9S1</accession>
<evidence type="ECO:0000255" key="1">
    <source>
        <dbReference type="HAMAP-Rule" id="MF_03122"/>
    </source>
</evidence>
<evidence type="ECO:0000256" key="2">
    <source>
        <dbReference type="SAM" id="MobiDB-lite"/>
    </source>
</evidence>
<evidence type="ECO:0000305" key="3"/>
<proteinExistence type="inferred from homology"/>
<feature type="initiator methionine" description="Removed" evidence="1">
    <location>
        <position position="1"/>
    </location>
</feature>
<feature type="chain" id="PRO_0000389360" description="Small ribosomal subunit protein eS1">
    <location>
        <begin position="2"/>
        <end position="256"/>
    </location>
</feature>
<feature type="region of interest" description="Disordered" evidence="2">
    <location>
        <begin position="1"/>
        <end position="21"/>
    </location>
</feature>
<feature type="compositionally biased region" description="Basic residues" evidence="2">
    <location>
        <begin position="1"/>
        <end position="18"/>
    </location>
</feature>
<feature type="modified residue" description="N-acetylalanine; partial" evidence="1">
    <location>
        <position position="2"/>
    </location>
</feature>
<protein>
    <recommendedName>
        <fullName evidence="1">Small ribosomal subunit protein eS1</fullName>
    </recommendedName>
    <alternativeName>
        <fullName evidence="3">40S ribosomal protein S1</fullName>
    </alternativeName>
</protein>
<name>RS3A_ASPNC</name>
<organism>
    <name type="scientific">Aspergillus niger (strain ATCC MYA-4892 / CBS 513.88 / FGSC A1513)</name>
    <dbReference type="NCBI Taxonomy" id="425011"/>
    <lineage>
        <taxon>Eukaryota</taxon>
        <taxon>Fungi</taxon>
        <taxon>Dikarya</taxon>
        <taxon>Ascomycota</taxon>
        <taxon>Pezizomycotina</taxon>
        <taxon>Eurotiomycetes</taxon>
        <taxon>Eurotiomycetidae</taxon>
        <taxon>Eurotiales</taxon>
        <taxon>Aspergillaceae</taxon>
        <taxon>Aspergillus</taxon>
        <taxon>Aspergillus subgen. Circumdati</taxon>
    </lineage>
</organism>
<dbReference type="EMBL" id="AM270393">
    <property type="protein sequence ID" value="CAL00584.1"/>
    <property type="molecule type" value="Genomic_DNA"/>
</dbReference>
<dbReference type="SMR" id="A2R9S1"/>
<dbReference type="HOGENOM" id="CLU_062507_0_0_1"/>
<dbReference type="Proteomes" id="UP000006706">
    <property type="component" value="Chromosome 5L"/>
</dbReference>
<dbReference type="GO" id="GO:0022627">
    <property type="term" value="C:cytosolic small ribosomal subunit"/>
    <property type="evidence" value="ECO:0007669"/>
    <property type="project" value="UniProtKB-UniRule"/>
</dbReference>
<dbReference type="GO" id="GO:0003735">
    <property type="term" value="F:structural constituent of ribosome"/>
    <property type="evidence" value="ECO:0007669"/>
    <property type="project" value="UniProtKB-UniRule"/>
</dbReference>
<dbReference type="GO" id="GO:0006412">
    <property type="term" value="P:translation"/>
    <property type="evidence" value="ECO:0007669"/>
    <property type="project" value="UniProtKB-UniRule"/>
</dbReference>
<dbReference type="HAMAP" id="MF_03122">
    <property type="entry name" value="Ribosomal_eS1_euk"/>
    <property type="match status" value="1"/>
</dbReference>
<dbReference type="InterPro" id="IPR001593">
    <property type="entry name" value="Ribosomal_eS1"/>
</dbReference>
<dbReference type="InterPro" id="IPR018281">
    <property type="entry name" value="Ribosomal_eS1_CS"/>
</dbReference>
<dbReference type="InterPro" id="IPR027500">
    <property type="entry name" value="Ribosomal_eS1_euk"/>
</dbReference>
<dbReference type="PANTHER" id="PTHR11830">
    <property type="entry name" value="40S RIBOSOMAL PROTEIN S3A"/>
    <property type="match status" value="1"/>
</dbReference>
<dbReference type="Pfam" id="PF01015">
    <property type="entry name" value="Ribosomal_S3Ae"/>
    <property type="match status" value="1"/>
</dbReference>
<dbReference type="SMART" id="SM01397">
    <property type="entry name" value="Ribosomal_S3Ae"/>
    <property type="match status" value="1"/>
</dbReference>
<dbReference type="PROSITE" id="PS01191">
    <property type="entry name" value="RIBOSOMAL_S3AE"/>
    <property type="match status" value="1"/>
</dbReference>
<comment type="subunit">
    <text evidence="1">Component of the small ribosomal subunit. Mature ribosomes consist of a small (40S) and a large (60S) subunit. The 40S subunit contains about 33 different proteins and 1 molecule of RNA (18S). The 60S subunit contains about 49 different proteins and 3 molecules of RNA (25S, 5.8S and 5S).</text>
</comment>
<comment type="subcellular location">
    <subcellularLocation>
        <location evidence="1">Cytoplasm</location>
    </subcellularLocation>
</comment>
<comment type="similarity">
    <text evidence="1">Belongs to the eukaryotic ribosomal protein eS1 family.</text>
</comment>
<keyword id="KW-0007">Acetylation</keyword>
<keyword id="KW-0963">Cytoplasm</keyword>
<keyword id="KW-1185">Reference proteome</keyword>
<keyword id="KW-0687">Ribonucleoprotein</keyword>
<keyword id="KW-0689">Ribosomal protein</keyword>